<keyword id="KW-0040">ANK repeat</keyword>
<keyword id="KW-0963">Cytoplasm</keyword>
<keyword id="KW-0903">Direct protein sequencing</keyword>
<keyword id="KW-0488">Methylation</keyword>
<keyword id="KW-0597">Phosphoprotein</keyword>
<keyword id="KW-1185">Reference proteome</keyword>
<keyword id="KW-0677">Repeat</keyword>
<keyword id="KW-0728">SH3 domain</keyword>
<reference key="1">
    <citation type="journal article" date="2002" name="J. Neurosci.">
        <title>CASK participates in alternative tripartite complexes in which Mint 1 competes for binding with Caskin 1, a novel CASK-binding protein.</title>
        <authorList>
            <person name="Tabuchi K."/>
            <person name="Biederer T."/>
            <person name="Butz S."/>
            <person name="Suedhof T.C."/>
        </authorList>
    </citation>
    <scope>NUCLEOTIDE SEQUENCE [MRNA]</scope>
    <scope>PROTEIN SEQUENCE OF 183-193; 279-287; 308-319; 727-743; 757-767; 769-782; 806-813; 888-894; 1265-1276 AND 1296-1303</scope>
    <scope>INTERACTION WITH CASK; LIN7A; LIN7B; LIN7C AND NRXN1</scope>
    <scope>TISSUE SPECIFICITY</scope>
    <scope>SUBCELLULAR LOCATION</scope>
    <source>
        <tissue>Brain</tissue>
    </source>
</reference>
<reference key="2">
    <citation type="journal article" date="2012" name="Nat. Commun.">
        <title>Quantitative maps of protein phosphorylation sites across 14 different rat organs and tissues.</title>
        <authorList>
            <person name="Lundby A."/>
            <person name="Secher A."/>
            <person name="Lage K."/>
            <person name="Nordsborg N.B."/>
            <person name="Dmytriyev A."/>
            <person name="Lundby C."/>
            <person name="Olsen J.V."/>
        </authorList>
    </citation>
    <scope>PHOSPHORYLATION [LARGE SCALE ANALYSIS] AT SER-432; SER-722; THR-740; SER-790; SER-890; SER-892 AND SER-1258</scope>
    <scope>IDENTIFICATION BY MASS SPECTROMETRY [LARGE SCALE ANALYSIS]</scope>
</reference>
<protein>
    <recommendedName>
        <fullName>Caskin-1</fullName>
    </recommendedName>
    <alternativeName>
        <fullName>CASK-interacting protein 1</fullName>
    </alternativeName>
</protein>
<organism>
    <name type="scientific">Rattus norvegicus</name>
    <name type="common">Rat</name>
    <dbReference type="NCBI Taxonomy" id="10116"/>
    <lineage>
        <taxon>Eukaryota</taxon>
        <taxon>Metazoa</taxon>
        <taxon>Chordata</taxon>
        <taxon>Craniata</taxon>
        <taxon>Vertebrata</taxon>
        <taxon>Euteleostomi</taxon>
        <taxon>Mammalia</taxon>
        <taxon>Eutheria</taxon>
        <taxon>Euarchontoglires</taxon>
        <taxon>Glires</taxon>
        <taxon>Rodentia</taxon>
        <taxon>Myomorpha</taxon>
        <taxon>Muroidea</taxon>
        <taxon>Muridae</taxon>
        <taxon>Murinae</taxon>
        <taxon>Rattus</taxon>
    </lineage>
</organism>
<accession>Q8VHK2</accession>
<gene>
    <name type="primary">Caskin1</name>
</gene>
<evidence type="ECO:0000250" key="1"/>
<evidence type="ECO:0000250" key="2">
    <source>
        <dbReference type="UniProtKB" id="Q6P9K8"/>
    </source>
</evidence>
<evidence type="ECO:0000250" key="3">
    <source>
        <dbReference type="UniProtKB" id="Q8WXD9"/>
    </source>
</evidence>
<evidence type="ECO:0000255" key="4">
    <source>
        <dbReference type="PROSITE-ProRule" id="PRU00184"/>
    </source>
</evidence>
<evidence type="ECO:0000255" key="5">
    <source>
        <dbReference type="PROSITE-ProRule" id="PRU00192"/>
    </source>
</evidence>
<evidence type="ECO:0000256" key="6">
    <source>
        <dbReference type="SAM" id="MobiDB-lite"/>
    </source>
</evidence>
<evidence type="ECO:0000269" key="7">
    <source>
    </source>
</evidence>
<evidence type="ECO:0000305" key="8"/>
<evidence type="ECO:0007744" key="9">
    <source>
    </source>
</evidence>
<dbReference type="EMBL" id="AF451975">
    <property type="protein sequence ID" value="AAL49756.1"/>
    <property type="molecule type" value="mRNA"/>
</dbReference>
<dbReference type="RefSeq" id="NP_542421.2">
    <property type="nucleotide sequence ID" value="NM_080690.2"/>
</dbReference>
<dbReference type="SMR" id="Q8VHK2"/>
<dbReference type="BioGRID" id="250839">
    <property type="interactions" value="17"/>
</dbReference>
<dbReference type="CORUM" id="Q8VHK2"/>
<dbReference type="FunCoup" id="Q8VHK2">
    <property type="interactions" value="1205"/>
</dbReference>
<dbReference type="IntAct" id="Q8VHK2">
    <property type="interactions" value="13"/>
</dbReference>
<dbReference type="MINT" id="Q8VHK2"/>
<dbReference type="STRING" id="10116.ENSRNOP00000039956"/>
<dbReference type="GlyGen" id="Q8VHK2">
    <property type="glycosylation" value="5 sites"/>
</dbReference>
<dbReference type="iPTMnet" id="Q8VHK2"/>
<dbReference type="PhosphoSitePlus" id="Q8VHK2"/>
<dbReference type="PaxDb" id="10116-ENSRNOP00000039956"/>
<dbReference type="GeneID" id="140722"/>
<dbReference type="KEGG" id="rno:140722"/>
<dbReference type="UCSC" id="RGD:620191">
    <property type="organism name" value="rat"/>
</dbReference>
<dbReference type="AGR" id="RGD:620191"/>
<dbReference type="CTD" id="57524"/>
<dbReference type="RGD" id="620191">
    <property type="gene designation" value="Caskin1"/>
</dbReference>
<dbReference type="eggNOG" id="KOG0507">
    <property type="taxonomic scope" value="Eukaryota"/>
</dbReference>
<dbReference type="InParanoid" id="Q8VHK2"/>
<dbReference type="OrthoDB" id="6156898at2759"/>
<dbReference type="PhylomeDB" id="Q8VHK2"/>
<dbReference type="PRO" id="PR:Q8VHK2"/>
<dbReference type="Proteomes" id="UP000002494">
    <property type="component" value="Unplaced"/>
</dbReference>
<dbReference type="GO" id="GO:0005737">
    <property type="term" value="C:cytoplasm"/>
    <property type="evidence" value="ECO:0000314"/>
    <property type="project" value="UniProtKB"/>
</dbReference>
<dbReference type="GO" id="GO:0098978">
    <property type="term" value="C:glutamatergic synapse"/>
    <property type="evidence" value="ECO:0000266"/>
    <property type="project" value="RGD"/>
</dbReference>
<dbReference type="GO" id="GO:0098794">
    <property type="term" value="C:postsynapse"/>
    <property type="evidence" value="ECO:0000266"/>
    <property type="project" value="RGD"/>
</dbReference>
<dbReference type="GO" id="GO:0042802">
    <property type="term" value="F:identical protein binding"/>
    <property type="evidence" value="ECO:0000266"/>
    <property type="project" value="RGD"/>
</dbReference>
<dbReference type="GO" id="GO:0019904">
    <property type="term" value="F:protein domain specific binding"/>
    <property type="evidence" value="ECO:0000314"/>
    <property type="project" value="RGD"/>
</dbReference>
<dbReference type="GO" id="GO:0099151">
    <property type="term" value="P:regulation of postsynaptic density assembly"/>
    <property type="evidence" value="ECO:0000266"/>
    <property type="project" value="RGD"/>
</dbReference>
<dbReference type="GO" id="GO:0007165">
    <property type="term" value="P:signal transduction"/>
    <property type="evidence" value="ECO:0000353"/>
    <property type="project" value="UniProtKB"/>
</dbReference>
<dbReference type="CDD" id="cd09497">
    <property type="entry name" value="SAM_caskin1_2_repeat1"/>
    <property type="match status" value="1"/>
</dbReference>
<dbReference type="CDD" id="cd09498">
    <property type="entry name" value="SAM_caskin1_2_repeat2"/>
    <property type="match status" value="1"/>
</dbReference>
<dbReference type="CDD" id="cd12062">
    <property type="entry name" value="SH3_Caskin1"/>
    <property type="match status" value="1"/>
</dbReference>
<dbReference type="DisProt" id="DP01127"/>
<dbReference type="FunFam" id="1.10.150.50:FF:000032">
    <property type="entry name" value="caskin-1 isoform X1"/>
    <property type="match status" value="1"/>
</dbReference>
<dbReference type="FunFam" id="1.25.40.20:FF:000225">
    <property type="entry name" value="caskin-1 isoform X1"/>
    <property type="match status" value="1"/>
</dbReference>
<dbReference type="FunFam" id="2.30.30.40:FF:000062">
    <property type="entry name" value="caskin-2 isoform X1"/>
    <property type="match status" value="1"/>
</dbReference>
<dbReference type="FunFam" id="1.10.150.50:FF:000028">
    <property type="entry name" value="caskin-2 isoform X2"/>
    <property type="match status" value="1"/>
</dbReference>
<dbReference type="FunFam" id="1.25.40.20:FF:000042">
    <property type="entry name" value="caskin-2 isoform X2"/>
    <property type="match status" value="1"/>
</dbReference>
<dbReference type="Gene3D" id="1.25.40.20">
    <property type="entry name" value="Ankyrin repeat-containing domain"/>
    <property type="match status" value="2"/>
</dbReference>
<dbReference type="Gene3D" id="2.30.30.40">
    <property type="entry name" value="SH3 Domains"/>
    <property type="match status" value="1"/>
</dbReference>
<dbReference type="Gene3D" id="1.10.150.50">
    <property type="entry name" value="Transcription Factor, Ets-1"/>
    <property type="match status" value="2"/>
</dbReference>
<dbReference type="InterPro" id="IPR033635">
    <property type="entry name" value="ANKS1/Caskin"/>
</dbReference>
<dbReference type="InterPro" id="IPR002110">
    <property type="entry name" value="Ankyrin_rpt"/>
</dbReference>
<dbReference type="InterPro" id="IPR036770">
    <property type="entry name" value="Ankyrin_rpt-contain_sf"/>
</dbReference>
<dbReference type="InterPro" id="IPR032232">
    <property type="entry name" value="Caskin1-CID"/>
</dbReference>
<dbReference type="InterPro" id="IPR035497">
    <property type="entry name" value="Caskin1/2_SAM_1"/>
</dbReference>
<dbReference type="InterPro" id="IPR035498">
    <property type="entry name" value="Caskin1/2_SAM_2"/>
</dbReference>
<dbReference type="InterPro" id="IPR035495">
    <property type="entry name" value="Caskin1_SH3"/>
</dbReference>
<dbReference type="InterPro" id="IPR032117">
    <property type="entry name" value="Caskin_C"/>
</dbReference>
<dbReference type="InterPro" id="IPR001660">
    <property type="entry name" value="SAM"/>
</dbReference>
<dbReference type="InterPro" id="IPR013761">
    <property type="entry name" value="SAM/pointed_sf"/>
</dbReference>
<dbReference type="InterPro" id="IPR036028">
    <property type="entry name" value="SH3-like_dom_sf"/>
</dbReference>
<dbReference type="InterPro" id="IPR001452">
    <property type="entry name" value="SH3_domain"/>
</dbReference>
<dbReference type="PANTHER" id="PTHR24174">
    <property type="entry name" value="ANKYRIN REPEAT AND STERILE ALPHA MOTIF DOMAIN-CONTAINING PROTEIN 1"/>
    <property type="match status" value="1"/>
</dbReference>
<dbReference type="PANTHER" id="PTHR24174:SF11">
    <property type="entry name" value="CASKIN-1"/>
    <property type="match status" value="1"/>
</dbReference>
<dbReference type="Pfam" id="PF12796">
    <property type="entry name" value="Ank_2"/>
    <property type="match status" value="2"/>
</dbReference>
<dbReference type="Pfam" id="PF13637">
    <property type="entry name" value="Ank_4"/>
    <property type="match status" value="1"/>
</dbReference>
<dbReference type="Pfam" id="PF16907">
    <property type="entry name" value="Caskin-Pro-rich"/>
    <property type="match status" value="1"/>
</dbReference>
<dbReference type="Pfam" id="PF16632">
    <property type="entry name" value="Caskin-tail"/>
    <property type="match status" value="1"/>
</dbReference>
<dbReference type="Pfam" id="PF16600">
    <property type="entry name" value="Caskin1-CID"/>
    <property type="match status" value="1"/>
</dbReference>
<dbReference type="Pfam" id="PF00536">
    <property type="entry name" value="SAM_1"/>
    <property type="match status" value="2"/>
</dbReference>
<dbReference type="Pfam" id="PF07653">
    <property type="entry name" value="SH3_2"/>
    <property type="match status" value="1"/>
</dbReference>
<dbReference type="PRINTS" id="PR01415">
    <property type="entry name" value="ANKYRIN"/>
</dbReference>
<dbReference type="SMART" id="SM00248">
    <property type="entry name" value="ANK"/>
    <property type="match status" value="6"/>
</dbReference>
<dbReference type="SMART" id="SM00454">
    <property type="entry name" value="SAM"/>
    <property type="match status" value="2"/>
</dbReference>
<dbReference type="SMART" id="SM00326">
    <property type="entry name" value="SH3"/>
    <property type="match status" value="1"/>
</dbReference>
<dbReference type="SUPFAM" id="SSF48403">
    <property type="entry name" value="Ankyrin repeat"/>
    <property type="match status" value="1"/>
</dbReference>
<dbReference type="SUPFAM" id="SSF47769">
    <property type="entry name" value="SAM/Pointed domain"/>
    <property type="match status" value="2"/>
</dbReference>
<dbReference type="SUPFAM" id="SSF50044">
    <property type="entry name" value="SH3-domain"/>
    <property type="match status" value="1"/>
</dbReference>
<dbReference type="PROSITE" id="PS50297">
    <property type="entry name" value="ANK_REP_REGION"/>
    <property type="match status" value="1"/>
</dbReference>
<dbReference type="PROSITE" id="PS50088">
    <property type="entry name" value="ANK_REPEAT"/>
    <property type="match status" value="6"/>
</dbReference>
<dbReference type="PROSITE" id="PS50105">
    <property type="entry name" value="SAM_DOMAIN"/>
    <property type="match status" value="2"/>
</dbReference>
<dbReference type="PROSITE" id="PS50002">
    <property type="entry name" value="SH3"/>
    <property type="match status" value="1"/>
</dbReference>
<proteinExistence type="evidence at protein level"/>
<name>CSKI1_RAT</name>
<comment type="function">
    <text>May link the scaffolding protein CASK to downstream intracellular effectors.</text>
</comment>
<comment type="subunit">
    <text evidence="1">Polymerizes, via the tandem SAM domains, to form long, 8 nM wide fibers, upon which other proteins can assemble (By similarity). Binds the CaM kinase domain of CASK. Forms a ternary complex with CASK and LIN7A, LIN7B or LIN7C. Competes with APBA1 that forms a similar complex with CASK and LIN7 proteins. The tripartite complex CASKIN1/CASK/LIN7(A/B/C) binds the cytoplasmic tail of NRXN1.</text>
</comment>
<comment type="interaction">
    <interactant intactId="EBI-7049475">
        <id>Q8VHK2</id>
    </interactant>
    <interactant intactId="EBI-743598">
        <id>Q9NYB9</id>
        <label>ABI2</label>
    </interactant>
    <organismsDiffer>true</organismsDiffer>
    <experiments>3</experiments>
</comment>
<comment type="subcellular location">
    <subcellularLocation>
        <location evidence="7">Cytoplasm</location>
    </subcellularLocation>
</comment>
<comment type="tissue specificity">
    <text evidence="7">Expressed in brain. Localized primarily to the neuropil and enriched in synaptic areas (at protein level).</text>
</comment>
<feature type="chain" id="PRO_0000066982" description="Caskin-1">
    <location>
        <begin position="1"/>
        <end position="1430"/>
    </location>
</feature>
<feature type="repeat" description="ANK 1">
    <location>
        <begin position="48"/>
        <end position="77"/>
    </location>
</feature>
<feature type="repeat" description="ANK 2">
    <location>
        <begin position="81"/>
        <end position="110"/>
    </location>
</feature>
<feature type="repeat" description="ANK 3">
    <location>
        <begin position="114"/>
        <end position="143"/>
    </location>
</feature>
<feature type="repeat" description="ANK 4">
    <location>
        <begin position="147"/>
        <end position="176"/>
    </location>
</feature>
<feature type="repeat" description="ANK 5">
    <location>
        <begin position="188"/>
        <end position="217"/>
    </location>
</feature>
<feature type="repeat" description="ANK 6">
    <location>
        <begin position="220"/>
        <end position="249"/>
    </location>
</feature>
<feature type="domain" description="SH3" evidence="5">
    <location>
        <begin position="281"/>
        <end position="347"/>
    </location>
</feature>
<feature type="domain" description="SAM 1" evidence="4">
    <location>
        <begin position="474"/>
        <end position="537"/>
    </location>
</feature>
<feature type="domain" description="SAM 2" evidence="4">
    <location>
        <begin position="543"/>
        <end position="607"/>
    </location>
</feature>
<feature type="region of interest" description="Disordered" evidence="6">
    <location>
        <begin position="348"/>
        <end position="372"/>
    </location>
</feature>
<feature type="region of interest" description="CASK-binding">
    <location>
        <begin position="375"/>
        <end position="471"/>
    </location>
</feature>
<feature type="region of interest" description="Disordered" evidence="6">
    <location>
        <begin position="421"/>
        <end position="472"/>
    </location>
</feature>
<feature type="region of interest" description="Disordered" evidence="6">
    <location>
        <begin position="667"/>
        <end position="1001"/>
    </location>
</feature>
<feature type="region of interest" description="Disordered" evidence="6">
    <location>
        <begin position="1015"/>
        <end position="1040"/>
    </location>
</feature>
<feature type="region of interest" description="Disordered" evidence="6">
    <location>
        <begin position="1055"/>
        <end position="1371"/>
    </location>
</feature>
<feature type="region of interest" description="Disordered" evidence="6">
    <location>
        <begin position="1388"/>
        <end position="1407"/>
    </location>
</feature>
<feature type="compositionally biased region" description="Polar residues" evidence="6">
    <location>
        <begin position="421"/>
        <end position="430"/>
    </location>
</feature>
<feature type="compositionally biased region" description="Low complexity" evidence="6">
    <location>
        <begin position="667"/>
        <end position="679"/>
    </location>
</feature>
<feature type="compositionally biased region" description="Polar residues" evidence="6">
    <location>
        <begin position="683"/>
        <end position="711"/>
    </location>
</feature>
<feature type="compositionally biased region" description="Pro residues" evidence="6">
    <location>
        <begin position="847"/>
        <end position="859"/>
    </location>
</feature>
<feature type="compositionally biased region" description="Pro residues" evidence="6">
    <location>
        <begin position="1027"/>
        <end position="1036"/>
    </location>
</feature>
<feature type="compositionally biased region" description="Basic and acidic residues" evidence="6">
    <location>
        <begin position="1147"/>
        <end position="1159"/>
    </location>
</feature>
<feature type="compositionally biased region" description="Pro residues" evidence="6">
    <location>
        <begin position="1190"/>
        <end position="1214"/>
    </location>
</feature>
<feature type="compositionally biased region" description="Pro residues" evidence="6">
    <location>
        <begin position="1267"/>
        <end position="1282"/>
    </location>
</feature>
<feature type="compositionally biased region" description="Low complexity" evidence="6">
    <location>
        <begin position="1283"/>
        <end position="1298"/>
    </location>
</feature>
<feature type="compositionally biased region" description="Low complexity" evidence="6">
    <location>
        <begin position="1308"/>
        <end position="1326"/>
    </location>
</feature>
<feature type="compositionally biased region" description="Low complexity" evidence="6">
    <location>
        <begin position="1344"/>
        <end position="1358"/>
    </location>
</feature>
<feature type="compositionally biased region" description="Basic and acidic residues" evidence="6">
    <location>
        <begin position="1388"/>
        <end position="1406"/>
    </location>
</feature>
<feature type="modified residue" description="Phosphotyrosine" evidence="2">
    <location>
        <position position="253"/>
    </location>
</feature>
<feature type="modified residue" description="Phosphoserine" evidence="2">
    <location>
        <position position="358"/>
    </location>
</feature>
<feature type="modified residue" description="Omega-N-methylarginine" evidence="3">
    <location>
        <position position="398"/>
    </location>
</feature>
<feature type="modified residue" description="Phosphoserine" evidence="2">
    <location>
        <position position="423"/>
    </location>
</feature>
<feature type="modified residue" description="Phosphoserine" evidence="9">
    <location>
        <position position="432"/>
    </location>
</feature>
<feature type="modified residue" description="Phosphoserine" evidence="2">
    <location>
        <position position="635"/>
    </location>
</feature>
<feature type="modified residue" description="Phosphoserine" evidence="2">
    <location>
        <position position="648"/>
    </location>
</feature>
<feature type="modified residue" description="Phosphoserine" evidence="9">
    <location>
        <position position="722"/>
    </location>
</feature>
<feature type="modified residue" description="Phosphoserine" evidence="2">
    <location>
        <position position="727"/>
    </location>
</feature>
<feature type="modified residue" description="Phosphothreonine" evidence="9">
    <location>
        <position position="740"/>
    </location>
</feature>
<feature type="modified residue" description="Phosphoserine" evidence="9">
    <location>
        <position position="790"/>
    </location>
</feature>
<feature type="modified residue" description="Phosphoserine" evidence="9">
    <location>
        <position position="890"/>
    </location>
</feature>
<feature type="modified residue" description="Phosphoserine" evidence="9">
    <location>
        <position position="892"/>
    </location>
</feature>
<feature type="modified residue" description="Phosphoserine" evidence="2">
    <location>
        <position position="988"/>
    </location>
</feature>
<feature type="modified residue" description="Phosphothreonine" evidence="2">
    <location>
        <position position="1066"/>
    </location>
</feature>
<feature type="modified residue" description="Phosphoserine" evidence="2">
    <location>
        <position position="1068"/>
    </location>
</feature>
<feature type="modified residue" description="Phosphoserine" evidence="9">
    <location>
        <position position="1258"/>
    </location>
</feature>
<feature type="modified residue" description="Phosphothreonine" evidence="2">
    <location>
        <position position="1267"/>
    </location>
</feature>
<feature type="modified residue" description="Phosphoserine" evidence="2">
    <location>
        <position position="1362"/>
    </location>
</feature>
<feature type="sequence conflict" description="In Ref. 1; AA sequence." evidence="8" ref="1">
    <original>T</original>
    <variation>K</variation>
    <location>
        <position position="782"/>
    </location>
</feature>
<feature type="sequence conflict" description="In Ref. 1; AA sequence." evidence="8" ref="1">
    <original>P</original>
    <variation>I</variation>
    <location>
        <position position="813"/>
    </location>
</feature>
<sequence length="1430" mass="150347">MGKEQELVQAVKAEDVGTAQRLLQRPRPGKAKLLGSTKKINVNFQDPDGFSALHHAALNGNTELISLLLEAQAAVDIKDNKGMRPLHYAAWQGRKEPMKLVLKAGSAVNVPSDEGHIPLHLAAQHGHYDVSEMLLQHQSNPCIVDNSGKTPLDLACEFGRVGVVQLLLSSNMCAALLEPRPGDTTDPNGTSPLHLAAKNGHIDIIRLLLQAGIDINRQTKSGTALHEAALCGKTEVVRLLLDSGINAQVRNTYSQTALDIVHQFTTSQASKEIKQLLREASAALQVRATKDYCNNYDLTSLNVKAGDIITVLEQHPDGRWKGCIHDNRTGNDRVGYFPSSLGEAIVKRAGSRTGSEPSPPQGGGSLGPSAPPEEIWVLRKPFAGGDRSGSLSNVAGGRSTGGHALHAGAEGVKLLATVLSQKSVSESSPGDSPVKPPEGSSGAARSQPPAAHAGQVYGEQPPKKLESSSASEGKSAEAVSQWLATFQLQLYAPNFTSAGYDLPTISRMTPEDLTAIGVTKPGHRKKITAEISGLNIPDCLPEHKPANLAVWLSMIGLAQYYKVLVDNGYENIDFITDITWEDLQEIGITKLGHQKKLMLAVRKLAELQKAEYSKYEGGPLRRKAPQSLEMMAIESPPPSEPAAAECQSPKMTTFQDSELSGELQAALSGPAEAGAAAAEKSSNHLPATPRTTSRQESSLSGRARHMSSSQELLGDGPQGPGSPMSRSQEYLLDEGPAPGTPPKEVRSSRHGHSVKRASVPPVPGKPRQVLPSGVSHFTPPQTPTKAQPGSPQALGGPHGPATAKVKPTPQLLPPTDRPMSPRSLPQSPTHRGFAYVLPQPVEGEAGPPAPGPVPPPVPAAVPTLCLPPEADVEPRRPKKRAHSLNRYAASDSEPERDELLVPAAAGPYATVQRRVGRSHSVRAPAGTDKNVNRSQSFAVRPRKKGPPPPPPKRSSSAMASANLADEPSPDVETEDGRLGVRAQRRRASDLAGSVDTGSAGSVKSIAAMLELSSIGGGGRAIRRPPEGHPTPRPASPDPGRVATVLASVKHKEAIGPDGEVVNRRRTLSGPVTGLLATARRGPGEPAEQSHFMEDGTARQRLRGPAKGEAGVEGPPLARVEASATLKRRIRAKQSQQENVKFILTESDTVKRRPKAKEPDIGPEPPPPLSVYQNGTATIRRRPASEQAGPPELPPPPPPAEPPPTDLMPLPPLPLPDGSARKPVKPPVSPKPILAQPVSKIQGSPTPASKKVPLPGPGSPEVKRAHGTPPPVSPKPPPPPTAPKPAKALAGLQSSSATPSPVPSPARQPPAALIKPASSPPSQSASPAKPPSPGAPALQVPTKPPRAAASVVSGPPVASDCASPGDSARQKLEETSACLAAALQAVEEKIRQEDGQGPRPSSIEEKSTGSILEDIGSMFDDLADQLDAMLE</sequence>